<name>YL21A_YEAST</name>
<sequence>MESQQLHQNPHSLHGSAYASVTSKEVPSNQDPLAVSASNLPEFDRDSTKVNSQQETTPGTSAVPENHHHVSPQPASVPPPQNGQYQQHGMMTPNKAMASNWAHYQQPSMMTCSHYQTSPAYYQPDPHYPLPQYIPPLSTSSPDPIDLKNQHSEIPQAKTKVGNNVLPPHTLTSEENFSTWVKFYIRFLKNSNLGDIIPNDQGEIKRQMTYEEHAYIYNTFQAFAPFHLLPTWVKQILEINYADILTVLCKSVSKMQTNNQELKDWIALANLEYDGSTSADTFEITVSTIIQRLKENNINVSDRLACQLILKGLSGDFKYLRNQYRTKTNMKLSQLFAEIQLIYDENKIMNLNKPSQYKQHSEYKNVSRTSPNTTNTKVTTRNYHRTNSSKPRAAKAHNIATSSKFSRVNNDHINESTVSSQYLSDDNELSLRPATERI</sequence>
<feature type="chain" id="PRO_0000279329" description="Transposon Ty2-LR1 Gag polyprotein">
    <location>
        <begin position="1"/>
        <end position="438"/>
    </location>
</feature>
<feature type="chain" id="PRO_0000279330" description="Capsid protein" evidence="1">
    <location>
        <begin position="1"/>
        <end position="397"/>
    </location>
</feature>
<feature type="peptide" id="PRO_0000279331" description="Gag-p4" evidence="1">
    <location>
        <begin position="398"/>
        <end position="438"/>
    </location>
</feature>
<feature type="region of interest" description="Disordered" evidence="2">
    <location>
        <begin position="1"/>
        <end position="86"/>
    </location>
</feature>
<feature type="region of interest" description="RNA-binding" evidence="1">
    <location>
        <begin position="295"/>
        <end position="397"/>
    </location>
</feature>
<feature type="region of interest" description="Disordered" evidence="2">
    <location>
        <begin position="364"/>
        <end position="397"/>
    </location>
</feature>
<feature type="region of interest" description="Disordered" evidence="2">
    <location>
        <begin position="419"/>
        <end position="438"/>
    </location>
</feature>
<feature type="compositionally biased region" description="Polar residues" evidence="2">
    <location>
        <begin position="1"/>
        <end position="11"/>
    </location>
</feature>
<feature type="compositionally biased region" description="Polar residues" evidence="2">
    <location>
        <begin position="19"/>
        <end position="39"/>
    </location>
</feature>
<feature type="compositionally biased region" description="Polar residues" evidence="2">
    <location>
        <begin position="49"/>
        <end position="60"/>
    </location>
</feature>
<feature type="compositionally biased region" description="Low complexity" evidence="2">
    <location>
        <begin position="369"/>
        <end position="381"/>
    </location>
</feature>
<feature type="site" description="Cleavage; by Ty2 protease" evidence="1">
    <location>
        <begin position="397"/>
        <end position="398"/>
    </location>
</feature>
<keyword id="KW-0963">Cytoplasm</keyword>
<keyword id="KW-1185">Reference proteome</keyword>
<keyword id="KW-0688">Ribosomal frameshifting</keyword>
<keyword id="KW-0694">RNA-binding</keyword>
<keyword id="KW-0814">Transposable element</keyword>
<accession>P0C2J4</accession>
<accession>D6VZ46</accession>
<evidence type="ECO:0000250" key="1"/>
<evidence type="ECO:0000256" key="2">
    <source>
        <dbReference type="SAM" id="MobiDB-lite"/>
    </source>
</evidence>
<gene>
    <name type="primary">TY2A-LR1</name>
    <name type="synonym">YLRWTy2-1 GAG</name>
    <name type="ordered locus">YLR410W-A</name>
    <name type="ORF">L9931.7b</name>
</gene>
<dbReference type="EMBL" id="U20162">
    <property type="status" value="NOT_ANNOTATED_CDS"/>
    <property type="molecule type" value="Genomic_DNA"/>
</dbReference>
<dbReference type="EMBL" id="BK006945">
    <property type="protein sequence ID" value="DAA09712.1"/>
    <property type="molecule type" value="Genomic_DNA"/>
</dbReference>
<dbReference type="PIR" id="S69965">
    <property type="entry name" value="S69965"/>
</dbReference>
<dbReference type="RefSeq" id="NP_058175.1">
    <molecule id="P0C2J4-1"/>
    <property type="nucleotide sequence ID" value="NM_001184410.1"/>
</dbReference>
<dbReference type="SMR" id="P0C2J4"/>
<dbReference type="BioGRID" id="31668">
    <property type="interactions" value="9"/>
</dbReference>
<dbReference type="FunCoup" id="P0C2J4">
    <property type="interactions" value="53"/>
</dbReference>
<dbReference type="PaxDb" id="4932-YLR410W-A"/>
<dbReference type="PeptideAtlas" id="P0C2J4"/>
<dbReference type="GeneID" id="851127"/>
<dbReference type="KEGG" id="sce:YLR410W-A"/>
<dbReference type="AGR" id="SGD:S000007379"/>
<dbReference type="SGD" id="S000007379">
    <property type="gene designation" value="YLR410W-A"/>
</dbReference>
<dbReference type="VEuPathDB" id="FungiDB:YLR410W-A"/>
<dbReference type="eggNOG" id="KOG0017">
    <property type="taxonomic scope" value="Eukaryota"/>
</dbReference>
<dbReference type="HOGENOM" id="CLU_045291_1_0_1"/>
<dbReference type="InParanoid" id="P0C2J4"/>
<dbReference type="OrthoDB" id="4046078at2759"/>
<dbReference type="Proteomes" id="UP000002311">
    <property type="component" value="Chromosome XII"/>
</dbReference>
<dbReference type="RNAct" id="P0C2J4">
    <property type="molecule type" value="protein"/>
</dbReference>
<dbReference type="GO" id="GO:0005737">
    <property type="term" value="C:cytoplasm"/>
    <property type="evidence" value="ECO:0007669"/>
    <property type="project" value="UniProtKB-SubCell"/>
</dbReference>
<dbReference type="GO" id="GO:0003723">
    <property type="term" value="F:RNA binding"/>
    <property type="evidence" value="ECO:0007669"/>
    <property type="project" value="UniProtKB-KW"/>
</dbReference>
<dbReference type="GO" id="GO:0075523">
    <property type="term" value="P:viral translational frameshifting"/>
    <property type="evidence" value="ECO:0007669"/>
    <property type="project" value="UniProtKB-KW"/>
</dbReference>
<dbReference type="InterPro" id="IPR015820">
    <property type="entry name" value="TYA"/>
</dbReference>
<dbReference type="Pfam" id="PF01021">
    <property type="entry name" value="TYA"/>
    <property type="match status" value="1"/>
</dbReference>
<protein>
    <recommendedName>
        <fullName>Transposon Ty2-LR1 Gag polyprotein</fullName>
        <shortName>TY2A</shortName>
        <shortName>TYA</shortName>
        <shortName>Transposon Ty2 protein A</shortName>
    </recommendedName>
    <component>
        <recommendedName>
            <fullName>Capsid protein</fullName>
            <shortName>CA</shortName>
        </recommendedName>
    </component>
    <component>
        <recommendedName>
            <fullName>Gag-p4</fullName>
        </recommendedName>
    </component>
</protein>
<comment type="function">
    <text evidence="1">Capsid protein (CA) is the structural component of the virus-like particle (VLP), forming the shell that encapsulates the retrotransposons dimeric RNA genome. The particles are assembled from trimer-clustered units and there are holes in the capsid shells that allow for the diffusion of macromolecules. CA also has nucleocapsid-like chaperone activity, promoting primer tRNA(i)-Met annealing to the multipartite primer-binding site (PBS), dimerization of Ty2 RNA and initiation of reverse transcription (By similarity).</text>
</comment>
<comment type="subunit">
    <text evidence="1">Homotrimer.</text>
</comment>
<comment type="subcellular location">
    <subcellularLocation>
        <location evidence="1">Cytoplasm</location>
    </subcellularLocation>
</comment>
<comment type="alternative products">
    <event type="ribosomal frameshifting"/>
    <isoform>
        <id>P0C2J4-1</id>
        <name>Transposon Ty2-LR1 Gag polyprotein</name>
        <sequence type="displayed"/>
    </isoform>
    <isoform>
        <id>P0C2J3-1</id>
        <name>Transposon Ty2-LR1 Gag-Pol polyprotein</name>
        <sequence type="external"/>
    </isoform>
    <text>The Gag-Pol polyprotein is generated by a +1 ribosomal frameshift.</text>
</comment>
<comment type="domain">
    <text evidence="1">The C-terminal RNA-binding region of CA is sufficient for all its nucleocapsid-like chaperone activities.</text>
</comment>
<comment type="miscellaneous">
    <text>Retrotransposons are mobile genetic entities that are able to replicate via an RNA intermediate and a reverse transcription step. In contrast to retroviruses, retrotransposons are non-infectious, lack an envelope and remain intracellular. Ty2 retrotransposons belong to the copia elements (pseudoviridae).</text>
</comment>
<comment type="miscellaneous">
    <molecule>Isoform Transposon Ty2-LR1 Gag polyprotein</molecule>
    <text>Produced by conventional translation.</text>
</comment>
<organism>
    <name type="scientific">Saccharomyces cerevisiae (strain ATCC 204508 / S288c)</name>
    <name type="common">Baker's yeast</name>
    <dbReference type="NCBI Taxonomy" id="559292"/>
    <lineage>
        <taxon>Eukaryota</taxon>
        <taxon>Fungi</taxon>
        <taxon>Dikarya</taxon>
        <taxon>Ascomycota</taxon>
        <taxon>Saccharomycotina</taxon>
        <taxon>Saccharomycetes</taxon>
        <taxon>Saccharomycetales</taxon>
        <taxon>Saccharomycetaceae</taxon>
        <taxon>Saccharomyces</taxon>
    </lineage>
</organism>
<proteinExistence type="inferred from homology"/>
<reference key="1">
    <citation type="journal article" date="1997" name="Nature">
        <title>The nucleotide sequence of Saccharomyces cerevisiae chromosome XII.</title>
        <authorList>
            <person name="Johnston M."/>
            <person name="Hillier L.W."/>
            <person name="Riles L."/>
            <person name="Albermann K."/>
            <person name="Andre B."/>
            <person name="Ansorge W."/>
            <person name="Benes V."/>
            <person name="Brueckner M."/>
            <person name="Delius H."/>
            <person name="Dubois E."/>
            <person name="Duesterhoeft A."/>
            <person name="Entian K.-D."/>
            <person name="Floeth M."/>
            <person name="Goffeau A."/>
            <person name="Hebling U."/>
            <person name="Heumann K."/>
            <person name="Heuss-Neitzel D."/>
            <person name="Hilbert H."/>
            <person name="Hilger F."/>
            <person name="Kleine K."/>
            <person name="Koetter P."/>
            <person name="Louis E.J."/>
            <person name="Messenguy F."/>
            <person name="Mewes H.-W."/>
            <person name="Miosga T."/>
            <person name="Moestl D."/>
            <person name="Mueller-Auer S."/>
            <person name="Nentwich U."/>
            <person name="Obermaier B."/>
            <person name="Piravandi E."/>
            <person name="Pohl T.M."/>
            <person name="Portetelle D."/>
            <person name="Purnelle B."/>
            <person name="Rechmann S."/>
            <person name="Rieger M."/>
            <person name="Rinke M."/>
            <person name="Rose M."/>
            <person name="Scharfe M."/>
            <person name="Scherens B."/>
            <person name="Scholler P."/>
            <person name="Schwager C."/>
            <person name="Schwarz S."/>
            <person name="Underwood A.P."/>
            <person name="Urrestarazu L.A."/>
            <person name="Vandenbol M."/>
            <person name="Verhasselt P."/>
            <person name="Vierendeels F."/>
            <person name="Voet M."/>
            <person name="Volckaert G."/>
            <person name="Voss H."/>
            <person name="Wambutt R."/>
            <person name="Wedler E."/>
            <person name="Wedler H."/>
            <person name="Zimmermann F.K."/>
            <person name="Zollner A."/>
            <person name="Hani J."/>
            <person name="Hoheisel J.D."/>
        </authorList>
    </citation>
    <scope>NUCLEOTIDE SEQUENCE [LARGE SCALE GENOMIC DNA]</scope>
    <source>
        <strain>ATCC 204508 / S288c</strain>
    </source>
</reference>
<reference key="2">
    <citation type="journal article" date="2014" name="G3 (Bethesda)">
        <title>The reference genome sequence of Saccharomyces cerevisiae: Then and now.</title>
        <authorList>
            <person name="Engel S.R."/>
            <person name="Dietrich F.S."/>
            <person name="Fisk D.G."/>
            <person name="Binkley G."/>
            <person name="Balakrishnan R."/>
            <person name="Costanzo M.C."/>
            <person name="Dwight S.S."/>
            <person name="Hitz B.C."/>
            <person name="Karra K."/>
            <person name="Nash R.S."/>
            <person name="Weng S."/>
            <person name="Wong E.D."/>
            <person name="Lloyd P."/>
            <person name="Skrzypek M.S."/>
            <person name="Miyasato S.R."/>
            <person name="Simison M."/>
            <person name="Cherry J.M."/>
        </authorList>
    </citation>
    <scope>GENOME REANNOTATION</scope>
    <source>
        <strain>ATCC 204508 / S288c</strain>
    </source>
</reference>
<reference key="3">
    <citation type="journal article" date="1998" name="Genome Res.">
        <title>Transposable elements and genome organization: a comprehensive survey of retrotransposons revealed by the complete Saccharomyces cerevisiae genome sequence.</title>
        <authorList>
            <person name="Kim J.M."/>
            <person name="Vanguri S."/>
            <person name="Boeke J.D."/>
            <person name="Gabriel A."/>
            <person name="Voytas D.F."/>
        </authorList>
    </citation>
    <scope>NOMENCLATURE</scope>
</reference>
<reference key="4">
    <citation type="journal article" date="2005" name="Cytogenet. Genome Res.">
        <title>Happy together: the life and times of Ty retrotransposons and their hosts.</title>
        <authorList>
            <person name="Lesage P."/>
            <person name="Todeschini A.L."/>
        </authorList>
    </citation>
    <scope>REVIEW</scope>
</reference>